<feature type="chain" id="PRO_1000164778" description="Acyl carrier protein">
    <location>
        <begin position="1"/>
        <end position="78"/>
    </location>
</feature>
<feature type="domain" description="Carrier" evidence="2">
    <location>
        <begin position="2"/>
        <end position="77"/>
    </location>
</feature>
<feature type="modified residue" description="O-(pantetheine 4'-phosphoryl)serine" evidence="2">
    <location>
        <position position="37"/>
    </location>
</feature>
<proteinExistence type="inferred from homology"/>
<sequence length="78" mass="8733">MSDILERVRKIVIEHLDADPEKVTEKASFIDDLGADSLDNVELVMAFEEEFDIEIPDDAAEHIQTVGDAVKFITEKTA</sequence>
<comment type="function">
    <text evidence="1">Carrier of the growing fatty acid chain in fatty acid biosynthesis.</text>
</comment>
<comment type="pathway">
    <text evidence="1">Lipid metabolism; fatty acid biosynthesis.</text>
</comment>
<comment type="subcellular location">
    <subcellularLocation>
        <location evidence="1">Cytoplasm</location>
    </subcellularLocation>
</comment>
<comment type="PTM">
    <text evidence="1">4'-phosphopantetheine is transferred from CoA to a specific serine of apo-ACP by AcpS. This modification is essential for activity because fatty acids are bound in thioester linkage to the sulfhydryl of the prosthetic group.</text>
</comment>
<comment type="similarity">
    <text evidence="1">Belongs to the acyl carrier protein (ACP) family.</text>
</comment>
<name>ACP_CAUVN</name>
<gene>
    <name evidence="1" type="primary">acpP</name>
    <name type="ordered locus">CCNA_01749</name>
</gene>
<evidence type="ECO:0000255" key="1">
    <source>
        <dbReference type="HAMAP-Rule" id="MF_01217"/>
    </source>
</evidence>
<evidence type="ECO:0000255" key="2">
    <source>
        <dbReference type="PROSITE-ProRule" id="PRU00258"/>
    </source>
</evidence>
<dbReference type="EMBL" id="CP001340">
    <property type="protein sequence ID" value="ACL95214.1"/>
    <property type="molecule type" value="Genomic_DNA"/>
</dbReference>
<dbReference type="RefSeq" id="WP_004615098.1">
    <property type="nucleotide sequence ID" value="NC_011916.1"/>
</dbReference>
<dbReference type="RefSeq" id="YP_002517122.1">
    <property type="nucleotide sequence ID" value="NC_011916.1"/>
</dbReference>
<dbReference type="SMR" id="B8GVP4"/>
<dbReference type="GeneID" id="7331214"/>
<dbReference type="KEGG" id="ccs:CCNA_01749"/>
<dbReference type="PATRIC" id="fig|565050.3.peg.1725"/>
<dbReference type="HOGENOM" id="CLU_108696_5_1_5"/>
<dbReference type="OrthoDB" id="9804551at2"/>
<dbReference type="PhylomeDB" id="B8GVP4"/>
<dbReference type="UniPathway" id="UPA00094"/>
<dbReference type="Proteomes" id="UP000001364">
    <property type="component" value="Chromosome"/>
</dbReference>
<dbReference type="GO" id="GO:0005829">
    <property type="term" value="C:cytosol"/>
    <property type="evidence" value="ECO:0007669"/>
    <property type="project" value="TreeGrafter"/>
</dbReference>
<dbReference type="GO" id="GO:0016020">
    <property type="term" value="C:membrane"/>
    <property type="evidence" value="ECO:0007669"/>
    <property type="project" value="GOC"/>
</dbReference>
<dbReference type="GO" id="GO:0000035">
    <property type="term" value="F:acyl binding"/>
    <property type="evidence" value="ECO:0007669"/>
    <property type="project" value="TreeGrafter"/>
</dbReference>
<dbReference type="GO" id="GO:0000036">
    <property type="term" value="F:acyl carrier activity"/>
    <property type="evidence" value="ECO:0007669"/>
    <property type="project" value="UniProtKB-UniRule"/>
</dbReference>
<dbReference type="GO" id="GO:0009245">
    <property type="term" value="P:lipid A biosynthetic process"/>
    <property type="evidence" value="ECO:0007669"/>
    <property type="project" value="TreeGrafter"/>
</dbReference>
<dbReference type="FunFam" id="1.10.1200.10:FF:000001">
    <property type="entry name" value="Acyl carrier protein"/>
    <property type="match status" value="1"/>
</dbReference>
<dbReference type="Gene3D" id="1.10.1200.10">
    <property type="entry name" value="ACP-like"/>
    <property type="match status" value="1"/>
</dbReference>
<dbReference type="HAMAP" id="MF_01217">
    <property type="entry name" value="Acyl_carrier"/>
    <property type="match status" value="1"/>
</dbReference>
<dbReference type="InterPro" id="IPR003231">
    <property type="entry name" value="ACP"/>
</dbReference>
<dbReference type="InterPro" id="IPR036736">
    <property type="entry name" value="ACP-like_sf"/>
</dbReference>
<dbReference type="InterPro" id="IPR009081">
    <property type="entry name" value="PP-bd_ACP"/>
</dbReference>
<dbReference type="NCBIfam" id="TIGR00517">
    <property type="entry name" value="acyl_carrier"/>
    <property type="match status" value="1"/>
</dbReference>
<dbReference type="NCBIfam" id="NF002148">
    <property type="entry name" value="PRK00982.1-2"/>
    <property type="match status" value="1"/>
</dbReference>
<dbReference type="NCBIfam" id="NF002149">
    <property type="entry name" value="PRK00982.1-3"/>
    <property type="match status" value="1"/>
</dbReference>
<dbReference type="NCBIfam" id="NF002150">
    <property type="entry name" value="PRK00982.1-4"/>
    <property type="match status" value="1"/>
</dbReference>
<dbReference type="NCBIfam" id="NF002151">
    <property type="entry name" value="PRK00982.1-5"/>
    <property type="match status" value="1"/>
</dbReference>
<dbReference type="PANTHER" id="PTHR20863">
    <property type="entry name" value="ACYL CARRIER PROTEIN"/>
    <property type="match status" value="1"/>
</dbReference>
<dbReference type="PANTHER" id="PTHR20863:SF76">
    <property type="entry name" value="CARRIER DOMAIN-CONTAINING PROTEIN"/>
    <property type="match status" value="1"/>
</dbReference>
<dbReference type="Pfam" id="PF00550">
    <property type="entry name" value="PP-binding"/>
    <property type="match status" value="1"/>
</dbReference>
<dbReference type="SUPFAM" id="SSF47336">
    <property type="entry name" value="ACP-like"/>
    <property type="match status" value="1"/>
</dbReference>
<dbReference type="PROSITE" id="PS50075">
    <property type="entry name" value="CARRIER"/>
    <property type="match status" value="1"/>
</dbReference>
<protein>
    <recommendedName>
        <fullName evidence="1">Acyl carrier protein</fullName>
        <shortName evidence="1">ACP</shortName>
    </recommendedName>
</protein>
<organism>
    <name type="scientific">Caulobacter vibrioides (strain NA1000 / CB15N)</name>
    <name type="common">Caulobacter crescentus</name>
    <dbReference type="NCBI Taxonomy" id="565050"/>
    <lineage>
        <taxon>Bacteria</taxon>
        <taxon>Pseudomonadati</taxon>
        <taxon>Pseudomonadota</taxon>
        <taxon>Alphaproteobacteria</taxon>
        <taxon>Caulobacterales</taxon>
        <taxon>Caulobacteraceae</taxon>
        <taxon>Caulobacter</taxon>
    </lineage>
</organism>
<keyword id="KW-0963">Cytoplasm</keyword>
<keyword id="KW-0275">Fatty acid biosynthesis</keyword>
<keyword id="KW-0276">Fatty acid metabolism</keyword>
<keyword id="KW-0444">Lipid biosynthesis</keyword>
<keyword id="KW-0443">Lipid metabolism</keyword>
<keyword id="KW-0596">Phosphopantetheine</keyword>
<keyword id="KW-0597">Phosphoprotein</keyword>
<keyword id="KW-1185">Reference proteome</keyword>
<accession>B8GVP4</accession>
<reference key="1">
    <citation type="journal article" date="2010" name="J. Bacteriol.">
        <title>The genetic basis of laboratory adaptation in Caulobacter crescentus.</title>
        <authorList>
            <person name="Marks M.E."/>
            <person name="Castro-Rojas C.M."/>
            <person name="Teiling C."/>
            <person name="Du L."/>
            <person name="Kapatral V."/>
            <person name="Walunas T.L."/>
            <person name="Crosson S."/>
        </authorList>
    </citation>
    <scope>NUCLEOTIDE SEQUENCE [LARGE SCALE GENOMIC DNA]</scope>
    <source>
        <strain>NA1000 / CB15N</strain>
    </source>
</reference>